<keyword id="KW-0002">3D-structure</keyword>
<keyword id="KW-0067">ATP-binding</keyword>
<keyword id="KW-0963">Cytoplasm</keyword>
<keyword id="KW-0342">GTP-binding</keyword>
<keyword id="KW-0378">Hydrolase</keyword>
<keyword id="KW-0547">Nucleotide-binding</keyword>
<keyword id="KW-0539">Nucleus</keyword>
<keyword id="KW-0597">Phosphoprotein</keyword>
<keyword id="KW-1185">Reference proteome</keyword>
<keyword id="KW-0690">Ribosome biogenesis</keyword>
<proteinExistence type="evidence at protein level"/>
<sequence>MEQSNKQHRKAKEKNTAKKKLHTQGHNAKAFAVAAPGKMARTMQRSSDVNERKLHVPMVDRTPEDDPPPFIVAVVGPPGTGKTTLIRSLVRRMTKSTLNDIQGPITVVSGKHRRLTFLECPADDLNAMIDIAKIADLVLLLIDGNFGFEMETMEFLNIAQHHGMPRVLGVATHLDLFKSQSTLRASKKRLKHRFWTEVYQGAKLFYLSGVINGRYPDREILNLSRFISVMKFRPLKWRNEHPYMLADRFTDLTHPELIETQGLQIDRKVAIYGYLHGTPLPSAPGTRVHIAGVGDFSVAQIEKLPDPCPTPFYQQKLDDFEREKMKEEAKANGEITTASTTRRRKRLDDKDKLIYAPMSDVGGVLMDKDAVYIDIGKKNEEPSFVPGQERGEGEKLMTGLQSVEQSIAEKFDGVGLQLFSNGTELHEVADHEGMDVESGEESIEDDEGKSKGRTSLRKPRIYGKPVQEEDADIDNLPSDEEPYTNDDDVQDSEPRMVEIDFNNTGEQGAEKLALETDSEFEESEDEFSWERTAANKLKKTESKKRTWNIGKLIYMDNISPEECIRRWRGEDDDSKDESDIEEDVDDDFFRKKDGTVTKEGNKDHAVDLEKFVPYFDTFEKLAKKWKSVDAIKERFLGAGILGNDNKTKSDSNEGGEELYGDFEDLEDGNPSEQAEDNSDKESEDEDENEDTNGDDDNSFTNFDAEEKKDLTMEQEREMNAAKKEKLRAQFEIEEGENFKEDDENNEYDTWYELQKAKISKQLEINNIEYQEMTPEQRQRIEGFKAGSYVRIVFEKVPMEFVKNFNPKFPIVMGGLLPTEIKFGIVKARLRRHRWHKKILKTNDPLVLSLGWRRFQTLPIYTTTDSRTRTRMLKYTPEHTYCNAAFYGPLCSPNTPFCGVQIVANSDTGNGFRIAATGIVEEIDVNIEIVKKLKLVGFPYKIFKNTAFIKDMFSSAMEVARFEGAQIKTVSGIRGEIKRALSKPEGHYRAAFEDKILMSDIVILRSWYPVRVKKFYNPVTSLLLKEKTEWKGLRLTGQIRAAMNLETPSNPDSAYHKIERVERHFNGLKVPKAVQKELPFKSQIHQMKPQKKKTYMAKRAVVLGGDEKKARSFIQKVLTISKAKDSKRKEQKASQRKERLKKLAKMEEEKSQRDKEKKKEYFAQNGKRTTMGGDDESRPRKMRR</sequence>
<comment type="function">
    <text evidence="4 5 6 7 8">GTPase required for synthesis of 40S ribosomal subunits and for processing the 35S pre-rRNA at sites A0, A1, and A2 (PubMed:11565748, PubMed:11565749, PubMed:16307926, PubMed:16376378). Controls access of pre-ribosomal RNA intermediates to RCL1 during ribosome biogenesis by binding of RCL1 in a GTP-dependent manner and, via its affinity to U3 snoRNA, delivering it to pre-ribosomes (PubMed:16307926, PubMed:16376378). GTP-binding and/or GTP hydrolysis may induce conformational rearrangements within the BMS1-RCL1 complex allowing the interaction of RCL1 with its RNA substrate (PubMed:25064857). Required for RCL1 import into the nucleus (PubMed:25064857).</text>
</comment>
<comment type="catalytic activity">
    <reaction evidence="6 7">
        <text>GTP + H2O = GDP + phosphate + H(+)</text>
        <dbReference type="Rhea" id="RHEA:19669"/>
        <dbReference type="ChEBI" id="CHEBI:15377"/>
        <dbReference type="ChEBI" id="CHEBI:15378"/>
        <dbReference type="ChEBI" id="CHEBI:37565"/>
        <dbReference type="ChEBI" id="CHEBI:43474"/>
        <dbReference type="ChEBI" id="CHEBI:58189"/>
    </reaction>
    <physiologicalReaction direction="left-to-right" evidence="6 7">
        <dbReference type="Rhea" id="RHEA:19670"/>
    </physiologicalReaction>
</comment>
<comment type="activity regulation">
    <text evidence="6 7">Interactions with RCL1 stimulates its GTPase and U3 snoRNA binding activities (PubMed:16307926, PubMed:16376378). RCL1 activates BMS1 by promoting GDP/GTP exchange (PubMed:16376378).</text>
</comment>
<comment type="biophysicochemical properties">
    <kinetics>
        <KM evidence="7">0.3 uM for GTP</KM>
    </kinetics>
</comment>
<comment type="subunit">
    <text evidence="6 7 8 9 10 11 12 13 14 15 16 17">Interacts directly with RCL1 and the U3 snoRNA to form a stable subcomplex (PubMed:16307926, PubMed:16376378, PubMed:25064857). Component of the 90S small subunit processome also known as 90S pre-ribosome that consists of the 35S pre-rRNA, early-associating ribosomal proteins most of which are part of the small ribosomal subunit, the U3 snoRNA and associated proteins (PubMed:27419870, PubMed:27980088, PubMed:28244370, PubMed:28945246, PubMed:32943521, PubMed:32943522, PubMed:33326748, PubMed:35650250, Ref.15).</text>
</comment>
<comment type="interaction">
    <interactant intactId="EBI-3683">
        <id>Q08965</id>
    </interactant>
    <interactant intactId="EBI-14892">
        <id>Q08096</id>
        <label>RCL1</label>
    </interactant>
    <organismsDiffer>false</organismsDiffer>
    <experiments>8</experiments>
</comment>
<comment type="interaction">
    <interactant intactId="EBI-3683">
        <id>Q08965</id>
    </interactant>
    <interactant intactId="EBI-22119">
        <id>Q02354</id>
        <label>UTP6</label>
    </interactant>
    <organismsDiffer>false</organismsDiffer>
    <experiments>5</experiments>
</comment>
<comment type="subcellular location">
    <subcellularLocation>
        <location evidence="5">Cytoplasm</location>
    </subcellularLocation>
    <subcellularLocation>
        <location evidence="5">Nucleus</location>
        <location evidence="5">Nucleolus</location>
    </subcellularLocation>
</comment>
<comment type="similarity">
    <text evidence="19">Belongs to the TRAFAC class translation factor GTPase superfamily. Bms1-like GTPase family. BMS1 subfamily.</text>
</comment>
<name>BMS1_YEAST</name>
<reference key="1">
    <citation type="journal article" date="1997" name="Nature">
        <title>The nucleotide sequence of Saccharomyces cerevisiae chromosome XVI.</title>
        <authorList>
            <person name="Bussey H."/>
            <person name="Storms R.K."/>
            <person name="Ahmed A."/>
            <person name="Albermann K."/>
            <person name="Allen E."/>
            <person name="Ansorge W."/>
            <person name="Araujo R."/>
            <person name="Aparicio A."/>
            <person name="Barrell B.G."/>
            <person name="Badcock K."/>
            <person name="Benes V."/>
            <person name="Botstein D."/>
            <person name="Bowman S."/>
            <person name="Brueckner M."/>
            <person name="Carpenter J."/>
            <person name="Cherry J.M."/>
            <person name="Chung E."/>
            <person name="Churcher C.M."/>
            <person name="Coster F."/>
            <person name="Davis K."/>
            <person name="Davis R.W."/>
            <person name="Dietrich F.S."/>
            <person name="Delius H."/>
            <person name="DiPaolo T."/>
            <person name="Dubois E."/>
            <person name="Duesterhoeft A."/>
            <person name="Duncan M."/>
            <person name="Floeth M."/>
            <person name="Fortin N."/>
            <person name="Friesen J.D."/>
            <person name="Fritz C."/>
            <person name="Goffeau A."/>
            <person name="Hall J."/>
            <person name="Hebling U."/>
            <person name="Heumann K."/>
            <person name="Hilbert H."/>
            <person name="Hillier L.W."/>
            <person name="Hunicke-Smith S."/>
            <person name="Hyman R.W."/>
            <person name="Johnston M."/>
            <person name="Kalman S."/>
            <person name="Kleine K."/>
            <person name="Komp C."/>
            <person name="Kurdi O."/>
            <person name="Lashkari D."/>
            <person name="Lew H."/>
            <person name="Lin A."/>
            <person name="Lin D."/>
            <person name="Louis E.J."/>
            <person name="Marathe R."/>
            <person name="Messenguy F."/>
            <person name="Mewes H.-W."/>
            <person name="Mirtipati S."/>
            <person name="Moestl D."/>
            <person name="Mueller-Auer S."/>
            <person name="Namath A."/>
            <person name="Nentwich U."/>
            <person name="Oefner P."/>
            <person name="Pearson D."/>
            <person name="Petel F.X."/>
            <person name="Pohl T.M."/>
            <person name="Purnelle B."/>
            <person name="Rajandream M.A."/>
            <person name="Rechmann S."/>
            <person name="Rieger M."/>
            <person name="Riles L."/>
            <person name="Roberts D."/>
            <person name="Schaefer M."/>
            <person name="Scharfe M."/>
            <person name="Scherens B."/>
            <person name="Schramm S."/>
            <person name="Schroeder M."/>
            <person name="Sdicu A.-M."/>
            <person name="Tettelin H."/>
            <person name="Urrestarazu L.A."/>
            <person name="Ushinsky S."/>
            <person name="Vierendeels F."/>
            <person name="Vissers S."/>
            <person name="Voss H."/>
            <person name="Walsh S.V."/>
            <person name="Wambutt R."/>
            <person name="Wang Y."/>
            <person name="Wedler E."/>
            <person name="Wedler H."/>
            <person name="Winnett E."/>
            <person name="Zhong W.-W."/>
            <person name="Zollner A."/>
            <person name="Vo D.H."/>
            <person name="Hani J."/>
        </authorList>
    </citation>
    <scope>NUCLEOTIDE SEQUENCE [LARGE SCALE GENOMIC DNA]</scope>
    <source>
        <strain>ATCC 204508 / S288c</strain>
    </source>
</reference>
<reference key="2">
    <citation type="journal article" date="2014" name="G3 (Bethesda)">
        <title>The reference genome sequence of Saccharomyces cerevisiae: Then and now.</title>
        <authorList>
            <person name="Engel S.R."/>
            <person name="Dietrich F.S."/>
            <person name="Fisk D.G."/>
            <person name="Binkley G."/>
            <person name="Balakrishnan R."/>
            <person name="Costanzo M.C."/>
            <person name="Dwight S.S."/>
            <person name="Hitz B.C."/>
            <person name="Karra K."/>
            <person name="Nash R.S."/>
            <person name="Weng S."/>
            <person name="Wong E.D."/>
            <person name="Lloyd P."/>
            <person name="Skrzypek M.S."/>
            <person name="Miyasato S.R."/>
            <person name="Simison M."/>
            <person name="Cherry J.M."/>
        </authorList>
    </citation>
    <scope>GENOME REANNOTATION</scope>
    <source>
        <strain>ATCC 204508 / S288c</strain>
    </source>
</reference>
<reference key="3">
    <citation type="journal article" date="2001" name="RNA">
        <title>Bms1p, a G-domain-containing protein, associates with Rcl1p and is required for 18S rRNA biogenesis in yeast.</title>
        <authorList>
            <person name="Wegierski T."/>
            <person name="Billy E."/>
            <person name="Nasr F."/>
            <person name="Filipowicz W."/>
        </authorList>
    </citation>
    <scope>FUNCTION</scope>
    <scope>INTERACTION WITH RCL1</scope>
</reference>
<reference key="4">
    <citation type="journal article" date="2001" name="RNA">
        <title>Bms1p, a novel GTP-binding protein, and the related Tsr1p are required for distinct steps of 40S ribosome biogenesis in yeast.</title>
        <authorList>
            <person name="Gelperin D."/>
            <person name="Horton L."/>
            <person name="Beckman J."/>
            <person name="Hensold J."/>
            <person name="Lemmon S.K."/>
        </authorList>
    </citation>
    <scope>FUNCTION</scope>
    <scope>SUBCELLULAR LOCATION</scope>
</reference>
<reference key="5">
    <citation type="journal article" date="2005" name="Mol. Cell">
        <title>An essential GTPase promotes assembly of preribosomal RNA processing complexes.</title>
        <authorList>
            <person name="Karbstein K."/>
            <person name="Jonas S."/>
            <person name="Doudna J.A."/>
        </authorList>
    </citation>
    <scope>FUNCTION</scope>
    <scope>CATALYTIC ACTIVITY</scope>
    <scope>INTERACTION WITH RCL1 AND U3 SNORNA</scope>
    <scope>MUTAGENESIS OF LYS-82 AND 557-ASN--SER-559</scope>
    <scope>DOMAIN</scope>
    <scope>ACTIVITY REGULATION</scope>
</reference>
<reference key="6">
    <citation type="journal article" date="2006" name="J. Mol. Biol.">
        <title>GTP-dependent formation of a ribonucleoprotein subcomplex required for ribosome biogenesis.</title>
        <authorList>
            <person name="Karbstein K."/>
            <person name="Doudna J.A."/>
        </authorList>
    </citation>
    <scope>FUNCTION</scope>
    <scope>CATALYTIC ACTIVITY</scope>
    <scope>BIOPHYSICOCHEMICAL PROPERTIES</scope>
    <scope>INTERACTION WITH RCL1 AND U3 SNORNA</scope>
    <scope>ACTIVITY REGULATION</scope>
</reference>
<reference key="7">
    <citation type="journal article" date="2007" name="J. Proteome Res.">
        <title>Large-scale phosphorylation analysis of alpha-factor-arrested Saccharomyces cerevisiae.</title>
        <authorList>
            <person name="Li X."/>
            <person name="Gerber S.A."/>
            <person name="Rudner A.D."/>
            <person name="Beausoleil S.A."/>
            <person name="Haas W."/>
            <person name="Villen J."/>
            <person name="Elias J.E."/>
            <person name="Gygi S.P."/>
        </authorList>
    </citation>
    <scope>PHOSPHORYLATION [LARGE SCALE ANALYSIS] AT SER-578</scope>
    <scope>IDENTIFICATION BY MASS SPECTROMETRY [LARGE SCALE ANALYSIS]</scope>
    <source>
        <strain>ADR376</strain>
    </source>
</reference>
<reference key="8">
    <citation type="journal article" date="2008" name="Mol. Cell. Proteomics">
        <title>A multidimensional chromatography technology for in-depth phosphoproteome analysis.</title>
        <authorList>
            <person name="Albuquerque C.P."/>
            <person name="Smolka M.B."/>
            <person name="Payne S.H."/>
            <person name="Bafna V."/>
            <person name="Eng J."/>
            <person name="Zhou H."/>
        </authorList>
    </citation>
    <scope>PHOSPHORYLATION [LARGE SCALE ANALYSIS] AT SER-478</scope>
    <scope>IDENTIFICATION BY MASS SPECTROMETRY [LARGE SCALE ANALYSIS]</scope>
</reference>
<reference key="9">
    <citation type="journal article" date="2009" name="Science">
        <title>Global analysis of Cdk1 substrate phosphorylation sites provides insights into evolution.</title>
        <authorList>
            <person name="Holt L.J."/>
            <person name="Tuch B.B."/>
            <person name="Villen J."/>
            <person name="Johnson A.D."/>
            <person name="Gygi S.P."/>
            <person name="Morgan D.O."/>
        </authorList>
    </citation>
    <scope>PHOSPHORYLATION [LARGE SCALE ANALYSIS] AT SER-438; SER-478; SER-492; THR-504; THR-516; SER-518; SER-523; SER-574 AND SER-578</scope>
    <scope>IDENTIFICATION BY MASS SPECTROMETRY [LARGE SCALE ANALYSIS]</scope>
</reference>
<reference evidence="20" key="10">
    <citation type="journal article" date="2014" name="Nucleic Acids Res.">
        <title>Crucial role of the Rcl1p-Bms1p interaction for yeast pre-ribosomal RNA processing.</title>
        <authorList>
            <person name="Delprato A."/>
            <person name="Al Kadri Y."/>
            <person name="Perebaskine N."/>
            <person name="Monfoulet C."/>
            <person name="Henry Y."/>
            <person name="Henras A.K."/>
            <person name="Fribourg S."/>
        </authorList>
    </citation>
    <scope>X-RAY CRYSTALLOGRAPHY (2.02 ANGSTROMS) OF 547-636 IN COMPLEX WITH RCL1</scope>
    <scope>FUNCTION</scope>
</reference>
<reference evidence="21" key="11">
    <citation type="journal article" date="2016" name="Cell">
        <title>Architecture of the 90S Pre-ribosome: A Structural View on the Birth of the Eukaryotic Ribosome.</title>
        <authorList>
            <person name="Kornprobst M."/>
            <person name="Turk M."/>
            <person name="Kellner N."/>
            <person name="Cheng J."/>
            <person name="Flemming D."/>
            <person name="Kos-Braun I."/>
            <person name="Kos M."/>
            <person name="Thoms M."/>
            <person name="Berninghausen O."/>
            <person name="Beckmann R."/>
            <person name="Hurt E."/>
        </authorList>
    </citation>
    <scope>STRUCTURE BY ELECTRON MICROSCOPY (7.30 ANGSTROMS) IN COMPLEX WITHIN THE 90S SMALL-SUBUNIT PROCESSOME</scope>
</reference>
<reference evidence="24 25" key="12">
    <citation type="journal article" date="2017" name="Elife">
        <title>Molecular architecture of the 90S small subunit pre-ribosome.</title>
        <authorList>
            <person name="Sun Q."/>
            <person name="Zhu X."/>
            <person name="Qi J."/>
            <person name="An W."/>
            <person name="Lan P."/>
            <person name="Tan D."/>
            <person name="Chen R."/>
            <person name="Wang B."/>
            <person name="Zheng S."/>
            <person name="Zhang C."/>
            <person name="Chen X."/>
            <person name="Zhang W."/>
            <person name="Chen J."/>
            <person name="Dong M.Q."/>
            <person name="Ye K."/>
        </authorList>
    </citation>
    <scope>STRUCTURE BY ELECTRON MICROSCOPY (4.50 ANGSTROMS) IN COMPLEX WITHIN THE 90S SMALL-SUBUNIT PROCESSOME</scope>
</reference>
<reference evidence="23" key="13">
    <citation type="journal article" date="2017" name="Nat. Struct. Mol. Biol.">
        <title>The complete structure of the small-subunit processome.</title>
        <authorList>
            <person name="Barandun J."/>
            <person name="Chaker-Margot M."/>
            <person name="Hunziker M."/>
            <person name="Molloy K.R."/>
            <person name="Chait B.T."/>
            <person name="Klinge S."/>
        </authorList>
    </citation>
    <scope>STRUCTURE BY ELECTRON MICROSCOPY (3.80 ANGSTROMS) IN COMPLEX WITHIN THE 90S SMALL-SUBUNIT PROCESSOME</scope>
</reference>
<reference evidence="22" key="14">
    <citation type="journal article" date="2017" name="Science">
        <title>Architecture of the yeast small subunit processome.</title>
        <authorList>
            <person name="Chaker-Margot M."/>
            <person name="Barandun J."/>
            <person name="Hunziker M."/>
            <person name="Klinge S."/>
        </authorList>
    </citation>
    <scope>STRUCTURE BY ELECTRON MICROSCOPY (5.10 ANGSTROMS) OF 546-636 IN COMPLEX WITHIN THE 90S SMALL-SUBUNIT PROCESSOME</scope>
</reference>
<reference evidence="26" key="15">
    <citation type="submission" date="2019-07" db="PDB data bank">
        <title>3.4 angstrom cryo-EM structure of yeast 90S small subunit preribosome.</title>
        <authorList>
            <person name="Du Y."/>
            <person name="An W."/>
            <person name="Qi S."/>
            <person name="Ye K."/>
        </authorList>
    </citation>
    <scope>STRUCTURE BY ELECTRON MICROSCOPY (3.40 ANGSTROMS) IN COMPLEX WITHIN THE 90S SMALL-SUBUNIT PROCESSOME</scope>
</reference>
<reference evidence="34 35 36 37 38 39 40" key="16">
    <citation type="journal article" date="2020" name="Science">
        <title>90S pre-ribosome transformation into the primordial 40S subunit.</title>
        <authorList>
            <person name="Cheng J."/>
            <person name="Lau B."/>
            <person name="La Venuta G."/>
            <person name="Ameismeier M."/>
            <person name="Berninghausen O."/>
            <person name="Hurt E."/>
            <person name="Beckmann R."/>
        </authorList>
    </citation>
    <scope>STRUCTURE BY ELECTRON MICROSCOPY (3.50 ANGSTROMS) IN COMPLEX WITHIN THE 90S SMALL-SUBUNIT PROCESSOME</scope>
</reference>
<reference evidence="27 28 29 30 31 32 33" key="17">
    <citation type="journal article" date="2020" name="Science">
        <title>Cryo-EM structure of 90S small ribosomal subunit precursors in transition states.</title>
        <authorList>
            <person name="Du Y."/>
            <person name="An W."/>
            <person name="Zhu X."/>
            <person name="Sun Q."/>
            <person name="Qi J."/>
            <person name="Ye K."/>
        </authorList>
    </citation>
    <scope>STRUCTURE BY ELECTRON MICROSCOPY (3.20 ANGSTROMS) IN COMPLEX WITHIN THE 90S SMALL-SUBUNIT PROCESSOME</scope>
</reference>
<reference evidence="46" key="18">
    <citation type="submission" date="2020-09" db="PDB data bank">
        <title>Cryo-EM structure of 90S preribosome with inactive Utp24 (state C).</title>
        <authorList>
            <person name="Ye K."/>
        </authorList>
    </citation>
    <scope>STRUCTURE BY ELECTRON MICROSCOPY (12.30 ANGSTROMS)</scope>
</reference>
<reference evidence="44" key="19">
    <citation type="submission" date="2020-09" db="PDB data bank">
        <title>Cryo-EM structure of 90S preribosome with inactive Utp24 (state A2).</title>
        <authorList>
            <person name="Ye K."/>
        </authorList>
    </citation>
    <scope>STRUCTURE BY ELECTRON MICROSCOPY (4.60 ANGSTROMS)</scope>
</reference>
<reference evidence="45" key="20">
    <citation type="submission" date="2020-09" db="PDB data bank">
        <title>Cryo-EM structure of 90S preribosome with inactive Utp24 (state F1).</title>
        <authorList>
            <person name="Ye K."/>
        </authorList>
    </citation>
    <scope>STRUCTURE BY ELECTRON MICROSCOPY (6.00 ANGSTROMS)</scope>
</reference>
<reference evidence="43" key="21">
    <citation type="submission" date="2020-09" db="PDB data bank">
        <title>Cryo-EM structure of 90S small ribosomal precursors complex with Dhr1.</title>
        <authorList>
            <person name="Ye K."/>
        </authorList>
    </citation>
    <scope>STRUCTURE BY ELECTRON MICROSCOPY (4.00 ANGSTROMS)</scope>
</reference>
<reference evidence="41 42" key="22">
    <citation type="journal article" date="2021" name="Mol. Cell">
        <title>Structure of the Maturing 90S Pre-ribosome in Association with the RNA Exosome.</title>
        <authorList>
            <person name="Lau B."/>
            <person name="Cheng J."/>
            <person name="Flemming D."/>
            <person name="La Venuta G."/>
            <person name="Berninghausen O."/>
            <person name="Beckmann R."/>
            <person name="Hurt E."/>
        </authorList>
    </citation>
    <scope>STRUCTURE BY ELECTRON MICROSCOPY (3.80 ANGSTROMS) IN COMPLEX WITHIN THE 90S SMALL-SUBUNIT PROCESSOME</scope>
</reference>
<reference evidence="47" key="23">
    <citation type="journal article" date="2022" name="Commun. Biol.">
        <title>Artificial intelligence-assisted cryoEM structure of Bfr2-Lcp5 complex observed in the yeast small subunit processome.</title>
        <authorList>
            <person name="Zhao Y."/>
            <person name="Rai J."/>
            <person name="Xu C."/>
            <person name="He H."/>
            <person name="Li H."/>
        </authorList>
    </citation>
    <scope>STRUCTURE BY ELECTRON MICROSCOPY (3.99 ANGSTROMS) OF 42-1164 IN COMPLEX WITHIN THE 90S SMALL-SUBUNIT PROCESSOME</scope>
</reference>
<reference evidence="48" key="24">
    <citation type="journal article" date="2022" name="Nucleic Acids Res.">
        <title>In vitro structural maturation of an early stage pre-40S particle coupled with U3 snoRNA release and central pseudoknot formation.</title>
        <authorList>
            <person name="Cheng J."/>
            <person name="La Venuta G."/>
            <person name="Lau B."/>
            <person name="Berninghausen O."/>
            <person name="Beckmann R."/>
            <person name="Hurt E."/>
        </authorList>
    </citation>
    <scope>STRUCTURE BY ELECTRON MICROSCOPY (3.30 ANGSTROMS) IN COMPLEX WITHIN THE 90S SMALL-SUBUNIT PROCESSOME</scope>
</reference>
<evidence type="ECO:0000255" key="1"/>
<evidence type="ECO:0000255" key="2">
    <source>
        <dbReference type="PROSITE-ProRule" id="PRU01051"/>
    </source>
</evidence>
<evidence type="ECO:0000256" key="3">
    <source>
        <dbReference type="SAM" id="MobiDB-lite"/>
    </source>
</evidence>
<evidence type="ECO:0000269" key="4">
    <source>
    </source>
</evidence>
<evidence type="ECO:0000269" key="5">
    <source>
    </source>
</evidence>
<evidence type="ECO:0000269" key="6">
    <source>
    </source>
</evidence>
<evidence type="ECO:0000269" key="7">
    <source>
    </source>
</evidence>
<evidence type="ECO:0000269" key="8">
    <source>
    </source>
</evidence>
<evidence type="ECO:0000269" key="9">
    <source>
    </source>
</evidence>
<evidence type="ECO:0000269" key="10">
    <source>
    </source>
</evidence>
<evidence type="ECO:0000269" key="11">
    <source>
    </source>
</evidence>
<evidence type="ECO:0000269" key="12">
    <source>
    </source>
</evidence>
<evidence type="ECO:0000269" key="13">
    <source>
    </source>
</evidence>
<evidence type="ECO:0000269" key="14">
    <source>
    </source>
</evidence>
<evidence type="ECO:0000269" key="15">
    <source>
    </source>
</evidence>
<evidence type="ECO:0000269" key="16">
    <source>
    </source>
</evidence>
<evidence type="ECO:0000269" key="17">
    <source ref="15"/>
</evidence>
<evidence type="ECO:0000303" key="18">
    <source>
    </source>
</evidence>
<evidence type="ECO:0000305" key="19"/>
<evidence type="ECO:0007744" key="20">
    <source>
        <dbReference type="PDB" id="4CLQ"/>
    </source>
</evidence>
<evidence type="ECO:0007744" key="21">
    <source>
        <dbReference type="PDB" id="5JPQ"/>
    </source>
</evidence>
<evidence type="ECO:0007744" key="22">
    <source>
        <dbReference type="PDB" id="5TZS"/>
    </source>
</evidence>
<evidence type="ECO:0007744" key="23">
    <source>
        <dbReference type="PDB" id="5WLC"/>
    </source>
</evidence>
<evidence type="ECO:0007744" key="24">
    <source>
        <dbReference type="PDB" id="5WYJ"/>
    </source>
</evidence>
<evidence type="ECO:0007744" key="25">
    <source>
        <dbReference type="PDB" id="5WYK"/>
    </source>
</evidence>
<evidence type="ECO:0007744" key="26">
    <source>
        <dbReference type="PDB" id="6KE6"/>
    </source>
</evidence>
<evidence type="ECO:0007744" key="27">
    <source>
        <dbReference type="PDB" id="6LQP"/>
    </source>
</evidence>
<evidence type="ECO:0007744" key="28">
    <source>
        <dbReference type="PDB" id="6LQQ"/>
    </source>
</evidence>
<evidence type="ECO:0007744" key="29">
    <source>
        <dbReference type="PDB" id="6LQR"/>
    </source>
</evidence>
<evidence type="ECO:0007744" key="30">
    <source>
        <dbReference type="PDB" id="6LQS"/>
    </source>
</evidence>
<evidence type="ECO:0007744" key="31">
    <source>
        <dbReference type="PDB" id="6LQT"/>
    </source>
</evidence>
<evidence type="ECO:0007744" key="32">
    <source>
        <dbReference type="PDB" id="6LQU"/>
    </source>
</evidence>
<evidence type="ECO:0007744" key="33">
    <source>
        <dbReference type="PDB" id="6LQV"/>
    </source>
</evidence>
<evidence type="ECO:0007744" key="34">
    <source>
        <dbReference type="PDB" id="6ZQA"/>
    </source>
</evidence>
<evidence type="ECO:0007744" key="35">
    <source>
        <dbReference type="PDB" id="6ZQB"/>
    </source>
</evidence>
<evidence type="ECO:0007744" key="36">
    <source>
        <dbReference type="PDB" id="6ZQC"/>
    </source>
</evidence>
<evidence type="ECO:0007744" key="37">
    <source>
        <dbReference type="PDB" id="6ZQD"/>
    </source>
</evidence>
<evidence type="ECO:0007744" key="38">
    <source>
        <dbReference type="PDB" id="6ZQE"/>
    </source>
</evidence>
<evidence type="ECO:0007744" key="39">
    <source>
        <dbReference type="PDB" id="6ZQF"/>
    </source>
</evidence>
<evidence type="ECO:0007744" key="40">
    <source>
        <dbReference type="PDB" id="6ZQG"/>
    </source>
</evidence>
<evidence type="ECO:0007744" key="41">
    <source>
        <dbReference type="PDB" id="7AJT"/>
    </source>
</evidence>
<evidence type="ECO:0007744" key="42">
    <source>
        <dbReference type="PDB" id="7AJU"/>
    </source>
</evidence>
<evidence type="ECO:0007744" key="43">
    <source>
        <dbReference type="PDB" id="7D4I"/>
    </source>
</evidence>
<evidence type="ECO:0007744" key="44">
    <source>
        <dbReference type="PDB" id="7D5S"/>
    </source>
</evidence>
<evidence type="ECO:0007744" key="45">
    <source>
        <dbReference type="PDB" id="7D5T"/>
    </source>
</evidence>
<evidence type="ECO:0007744" key="46">
    <source>
        <dbReference type="PDB" id="7D63"/>
    </source>
</evidence>
<evidence type="ECO:0007744" key="47">
    <source>
        <dbReference type="PDB" id="7SUK"/>
    </source>
</evidence>
<evidence type="ECO:0007744" key="48">
    <source>
        <dbReference type="PDB" id="7WTL"/>
    </source>
</evidence>
<evidence type="ECO:0007744" key="49">
    <source>
    </source>
</evidence>
<evidence type="ECO:0007744" key="50">
    <source>
    </source>
</evidence>
<evidence type="ECO:0007744" key="51">
    <source>
    </source>
</evidence>
<evidence type="ECO:0007829" key="52">
    <source>
        <dbReference type="PDB" id="4CLQ"/>
    </source>
</evidence>
<protein>
    <recommendedName>
        <fullName evidence="18">Ribosome biogenesis protein BMS1</fullName>
        <ecNumber evidence="6 7">3.6.5.-</ecNumber>
    </recommendedName>
</protein>
<accession>Q08965</accession>
<accession>D6W3F3</accession>
<dbReference type="EC" id="3.6.5.-" evidence="6 7"/>
<dbReference type="EMBL" id="Z73573">
    <property type="protein sequence ID" value="CAA97932.1"/>
    <property type="molecule type" value="Genomic_DNA"/>
</dbReference>
<dbReference type="EMBL" id="BK006949">
    <property type="protein sequence ID" value="DAA11219.1"/>
    <property type="molecule type" value="Genomic_DNA"/>
</dbReference>
<dbReference type="PIR" id="S65236">
    <property type="entry name" value="S65236"/>
</dbReference>
<dbReference type="RefSeq" id="NP_015107.1">
    <property type="nucleotide sequence ID" value="NM_001184031.1"/>
</dbReference>
<dbReference type="PDB" id="4CLQ">
    <property type="method" value="X-ray"/>
    <property type="resolution" value="2.02 A"/>
    <property type="chains" value="B=547-636"/>
</dbReference>
<dbReference type="PDB" id="5JPQ">
    <property type="method" value="EM"/>
    <property type="resolution" value="7.30 A"/>
    <property type="chains" value="a=1-1183"/>
</dbReference>
<dbReference type="PDB" id="5TZS">
    <property type="method" value="EM"/>
    <property type="resolution" value="5.10 A"/>
    <property type="chains" value="i=547-636"/>
</dbReference>
<dbReference type="PDB" id="5WLC">
    <property type="method" value="EM"/>
    <property type="resolution" value="3.80 A"/>
    <property type="chains" value="SI=1-1183"/>
</dbReference>
<dbReference type="PDB" id="5WYJ">
    <property type="method" value="EM"/>
    <property type="resolution" value="8.70 A"/>
    <property type="chains" value="B1=1-1183"/>
</dbReference>
<dbReference type="PDB" id="5WYK">
    <property type="method" value="EM"/>
    <property type="resolution" value="4.50 A"/>
    <property type="chains" value="B1=1-1183"/>
</dbReference>
<dbReference type="PDB" id="6KE6">
    <property type="method" value="EM"/>
    <property type="resolution" value="3.40 A"/>
    <property type="chains" value="RJ=1-1183"/>
</dbReference>
<dbReference type="PDB" id="6LQP">
    <property type="method" value="EM"/>
    <property type="resolution" value="3.20 A"/>
    <property type="chains" value="RJ=1-1183"/>
</dbReference>
<dbReference type="PDB" id="6LQQ">
    <property type="method" value="EM"/>
    <property type="resolution" value="4.10 A"/>
    <property type="chains" value="RJ=1-1183"/>
</dbReference>
<dbReference type="PDB" id="6LQR">
    <property type="method" value="EM"/>
    <property type="resolution" value="8.60 A"/>
    <property type="chains" value="RJ=1-1183"/>
</dbReference>
<dbReference type="PDB" id="6LQS">
    <property type="method" value="EM"/>
    <property type="resolution" value="3.80 A"/>
    <property type="chains" value="RJ=1-1183"/>
</dbReference>
<dbReference type="PDB" id="6LQT">
    <property type="method" value="EM"/>
    <property type="resolution" value="4.90 A"/>
    <property type="chains" value="RJ=1-1183"/>
</dbReference>
<dbReference type="PDB" id="6LQU">
    <property type="method" value="EM"/>
    <property type="resolution" value="3.70 A"/>
    <property type="chains" value="RJ=1-1183"/>
</dbReference>
<dbReference type="PDB" id="6LQV">
    <property type="method" value="EM"/>
    <property type="resolution" value="4.80 A"/>
    <property type="chains" value="RJ=1-1183"/>
</dbReference>
<dbReference type="PDB" id="6ZQA">
    <property type="method" value="EM"/>
    <property type="resolution" value="4.40 A"/>
    <property type="chains" value="CL=1-1183"/>
</dbReference>
<dbReference type="PDB" id="6ZQB">
    <property type="method" value="EM"/>
    <property type="resolution" value="3.90 A"/>
    <property type="chains" value="CL=1-1183"/>
</dbReference>
<dbReference type="PDB" id="6ZQC">
    <property type="method" value="EM"/>
    <property type="resolution" value="3.80 A"/>
    <property type="chains" value="CL=1-1183"/>
</dbReference>
<dbReference type="PDB" id="6ZQD">
    <property type="method" value="EM"/>
    <property type="resolution" value="3.80 A"/>
    <property type="chains" value="CL=1-1183"/>
</dbReference>
<dbReference type="PDB" id="6ZQE">
    <property type="method" value="EM"/>
    <property type="resolution" value="7.10 A"/>
    <property type="chains" value="CL=1-1183"/>
</dbReference>
<dbReference type="PDB" id="6ZQF">
    <property type="method" value="EM"/>
    <property type="resolution" value="4.90 A"/>
    <property type="chains" value="CL=1-1183"/>
</dbReference>
<dbReference type="PDB" id="6ZQG">
    <property type="method" value="EM"/>
    <property type="resolution" value="3.50 A"/>
    <property type="chains" value="CL=1-1183"/>
</dbReference>
<dbReference type="PDB" id="7AJT">
    <property type="method" value="EM"/>
    <property type="resolution" value="4.60 A"/>
    <property type="chains" value="CL=1-1183"/>
</dbReference>
<dbReference type="PDB" id="7AJU">
    <property type="method" value="EM"/>
    <property type="resolution" value="3.80 A"/>
    <property type="chains" value="CL=1-1183"/>
</dbReference>
<dbReference type="PDB" id="7D4I">
    <property type="method" value="EM"/>
    <property type="resolution" value="4.00 A"/>
    <property type="chains" value="RJ=1-1183"/>
</dbReference>
<dbReference type="PDB" id="7D5S">
    <property type="method" value="EM"/>
    <property type="resolution" value="4.60 A"/>
    <property type="chains" value="RJ=1-1183"/>
</dbReference>
<dbReference type="PDB" id="7D5T">
    <property type="method" value="EM"/>
    <property type="resolution" value="6.00 A"/>
    <property type="chains" value="RJ=1-1183"/>
</dbReference>
<dbReference type="PDB" id="7D63">
    <property type="method" value="EM"/>
    <property type="resolution" value="12.30 A"/>
    <property type="chains" value="RJ=1-1183"/>
</dbReference>
<dbReference type="PDB" id="7SUK">
    <property type="method" value="EM"/>
    <property type="resolution" value="3.99 A"/>
    <property type="chains" value="SI=42-1164"/>
</dbReference>
<dbReference type="PDB" id="7WTL">
    <property type="method" value="EM"/>
    <property type="resolution" value="3.30 A"/>
    <property type="chains" value="CL=1-1183"/>
</dbReference>
<dbReference type="PDBsum" id="4CLQ"/>
<dbReference type="PDBsum" id="5JPQ"/>
<dbReference type="PDBsum" id="5TZS"/>
<dbReference type="PDBsum" id="5WLC"/>
<dbReference type="PDBsum" id="5WYJ"/>
<dbReference type="PDBsum" id="5WYK"/>
<dbReference type="PDBsum" id="6KE6"/>
<dbReference type="PDBsum" id="6LQP"/>
<dbReference type="PDBsum" id="6LQQ"/>
<dbReference type="PDBsum" id="6LQR"/>
<dbReference type="PDBsum" id="6LQS"/>
<dbReference type="PDBsum" id="6LQT"/>
<dbReference type="PDBsum" id="6LQU"/>
<dbReference type="PDBsum" id="6LQV"/>
<dbReference type="PDBsum" id="6ZQA"/>
<dbReference type="PDBsum" id="6ZQB"/>
<dbReference type="PDBsum" id="6ZQC"/>
<dbReference type="PDBsum" id="6ZQD"/>
<dbReference type="PDBsum" id="6ZQE"/>
<dbReference type="PDBsum" id="6ZQF"/>
<dbReference type="PDBsum" id="6ZQG"/>
<dbReference type="PDBsum" id="7AJT"/>
<dbReference type="PDBsum" id="7AJU"/>
<dbReference type="PDBsum" id="7D4I"/>
<dbReference type="PDBsum" id="7D5S"/>
<dbReference type="PDBsum" id="7D5T"/>
<dbReference type="PDBsum" id="7D63"/>
<dbReference type="PDBsum" id="7SUK"/>
<dbReference type="PDBsum" id="7WTL"/>
<dbReference type="EMDB" id="EMD-0949"/>
<dbReference type="EMDB" id="EMD-0950"/>
<dbReference type="EMDB" id="EMD-0951"/>
<dbReference type="EMDB" id="EMD-0952"/>
<dbReference type="EMDB" id="EMD-0953"/>
<dbReference type="EMDB" id="EMD-0954"/>
<dbReference type="EMDB" id="EMD-0955"/>
<dbReference type="EMDB" id="EMD-11357"/>
<dbReference type="EMDB" id="EMD-11358"/>
<dbReference type="EMDB" id="EMD-11359"/>
<dbReference type="EMDB" id="EMD-11360"/>
<dbReference type="EMDB" id="EMD-11361"/>
<dbReference type="EMDB" id="EMD-11362"/>
<dbReference type="EMDB" id="EMD-11363"/>
<dbReference type="EMDB" id="EMD-11807"/>
<dbReference type="EMDB" id="EMD-11808"/>
<dbReference type="EMDB" id="EMD-25441"/>
<dbReference type="EMDB" id="EMD-30574"/>
<dbReference type="EMDB" id="EMD-30584"/>
<dbReference type="EMDB" id="EMD-30585"/>
<dbReference type="EMDB" id="EMD-30588"/>
<dbReference type="EMDB" id="EMD-32790"/>
<dbReference type="EMDB" id="EMD-6695"/>
<dbReference type="EMDB" id="EMD-6696"/>
<dbReference type="EMDB" id="EMD-8473"/>
<dbReference type="EMDB" id="EMD-8859"/>
<dbReference type="EMDB" id="EMD-9964"/>
<dbReference type="SMR" id="Q08965"/>
<dbReference type="BioGRID" id="35968">
    <property type="interactions" value="531"/>
</dbReference>
<dbReference type="ComplexPortal" id="CPX-1606">
    <property type="entry name" value="RCL1-BMS1 40S ribosomal subunit maturation complex"/>
</dbReference>
<dbReference type="DIP" id="DIP-6562N"/>
<dbReference type="FunCoup" id="Q08965">
    <property type="interactions" value="1771"/>
</dbReference>
<dbReference type="IntAct" id="Q08965">
    <property type="interactions" value="97"/>
</dbReference>
<dbReference type="MINT" id="Q08965"/>
<dbReference type="STRING" id="4932.YPL217C"/>
<dbReference type="GlyGen" id="Q08965">
    <property type="glycosylation" value="1 site"/>
</dbReference>
<dbReference type="iPTMnet" id="Q08965"/>
<dbReference type="PaxDb" id="4932-YPL217C"/>
<dbReference type="PeptideAtlas" id="Q08965"/>
<dbReference type="EnsemblFungi" id="YPL217C_mRNA">
    <property type="protein sequence ID" value="YPL217C"/>
    <property type="gene ID" value="YPL217C"/>
</dbReference>
<dbReference type="GeneID" id="855884"/>
<dbReference type="KEGG" id="sce:YPL217C"/>
<dbReference type="AGR" id="SGD:S000006138"/>
<dbReference type="SGD" id="S000006138">
    <property type="gene designation" value="BMS1"/>
</dbReference>
<dbReference type="VEuPathDB" id="FungiDB:YPL217C"/>
<dbReference type="eggNOG" id="KOG1951">
    <property type="taxonomic scope" value="Eukaryota"/>
</dbReference>
<dbReference type="GeneTree" id="ENSGT00940000153195"/>
<dbReference type="HOGENOM" id="CLU_002486_0_0_1"/>
<dbReference type="InParanoid" id="Q08965"/>
<dbReference type="OMA" id="KLHVPMV"/>
<dbReference type="OrthoDB" id="10260897at2759"/>
<dbReference type="BioCyc" id="YEAST:G3O-34106-MONOMER"/>
<dbReference type="Reactome" id="R-SCE-6791226">
    <property type="pathway name" value="Major pathway of rRNA processing in the nucleolus and cytosol"/>
</dbReference>
<dbReference type="BioGRID-ORCS" id="855884">
    <property type="hits" value="0 hits in 10 CRISPR screens"/>
</dbReference>
<dbReference type="CD-CODE" id="BDAE0F88">
    <property type="entry name" value="Nucleolus"/>
</dbReference>
<dbReference type="EvolutionaryTrace" id="Q08965"/>
<dbReference type="PRO" id="PR:Q08965"/>
<dbReference type="Proteomes" id="UP000002311">
    <property type="component" value="Chromosome XVI"/>
</dbReference>
<dbReference type="RNAct" id="Q08965">
    <property type="molecule type" value="protein"/>
</dbReference>
<dbReference type="GO" id="GO:0030686">
    <property type="term" value="C:90S preribosome"/>
    <property type="evidence" value="ECO:0000314"/>
    <property type="project" value="GO_Central"/>
</dbReference>
<dbReference type="GO" id="GO:0005737">
    <property type="term" value="C:cytoplasm"/>
    <property type="evidence" value="ECO:0000314"/>
    <property type="project" value="SGD"/>
</dbReference>
<dbReference type="GO" id="GO:0005739">
    <property type="term" value="C:mitochondrion"/>
    <property type="evidence" value="ECO:0007005"/>
    <property type="project" value="SGD"/>
</dbReference>
<dbReference type="GO" id="GO:0005730">
    <property type="term" value="C:nucleolus"/>
    <property type="evidence" value="ECO:0000314"/>
    <property type="project" value="GO_Central"/>
</dbReference>
<dbReference type="GO" id="GO:0005654">
    <property type="term" value="C:nucleoplasm"/>
    <property type="evidence" value="ECO:0000304"/>
    <property type="project" value="Reactome"/>
</dbReference>
<dbReference type="GO" id="GO:0005634">
    <property type="term" value="C:nucleus"/>
    <property type="evidence" value="ECO:0000314"/>
    <property type="project" value="SGD"/>
</dbReference>
<dbReference type="GO" id="GO:0032040">
    <property type="term" value="C:small-subunit processome"/>
    <property type="evidence" value="ECO:0000353"/>
    <property type="project" value="ComplexPortal"/>
</dbReference>
<dbReference type="GO" id="GO:0005524">
    <property type="term" value="F:ATP binding"/>
    <property type="evidence" value="ECO:0007669"/>
    <property type="project" value="UniProtKB-KW"/>
</dbReference>
<dbReference type="GO" id="GO:0016887">
    <property type="term" value="F:ATP hydrolysis activity"/>
    <property type="evidence" value="ECO:0007669"/>
    <property type="project" value="InterPro"/>
</dbReference>
<dbReference type="GO" id="GO:0005525">
    <property type="term" value="F:GTP binding"/>
    <property type="evidence" value="ECO:0000314"/>
    <property type="project" value="SGD"/>
</dbReference>
<dbReference type="GO" id="GO:0003924">
    <property type="term" value="F:GTPase activity"/>
    <property type="evidence" value="ECO:0000314"/>
    <property type="project" value="SGD"/>
</dbReference>
<dbReference type="GO" id="GO:0003729">
    <property type="term" value="F:mRNA binding"/>
    <property type="evidence" value="ECO:0007005"/>
    <property type="project" value="SGD"/>
</dbReference>
<dbReference type="GO" id="GO:0034511">
    <property type="term" value="F:U3 snoRNA binding"/>
    <property type="evidence" value="ECO:0000314"/>
    <property type="project" value="SGD"/>
</dbReference>
<dbReference type="GO" id="GO:0000480">
    <property type="term" value="P:endonucleolytic cleavage in 5'-ETS of tricistronic rRNA transcript (SSU-rRNA, 5.8S rRNA, LSU-rRNA)"/>
    <property type="evidence" value="ECO:0000315"/>
    <property type="project" value="SGD"/>
</dbReference>
<dbReference type="GO" id="GO:0000479">
    <property type="term" value="P:endonucleolytic cleavage of tricistronic rRNA transcript (SSU-rRNA, 5.8S rRNA, LSU-rRNA)"/>
    <property type="evidence" value="ECO:0000318"/>
    <property type="project" value="GO_Central"/>
</dbReference>
<dbReference type="GO" id="GO:0000472">
    <property type="term" value="P:endonucleolytic cleavage to generate mature 5'-end of SSU-rRNA from (SSU-rRNA, 5.8S rRNA, LSU-rRNA)"/>
    <property type="evidence" value="ECO:0000315"/>
    <property type="project" value="SGD"/>
</dbReference>
<dbReference type="GO" id="GO:0030490">
    <property type="term" value="P:maturation of SSU-rRNA"/>
    <property type="evidence" value="ECO:0000303"/>
    <property type="project" value="ComplexPortal"/>
</dbReference>
<dbReference type="GO" id="GO:0000462">
    <property type="term" value="P:maturation of SSU-rRNA from tricistronic rRNA transcript (SSU-rRNA, 5.8S rRNA, LSU-rRNA)"/>
    <property type="evidence" value="ECO:0000318"/>
    <property type="project" value="GO_Central"/>
</dbReference>
<dbReference type="GO" id="GO:2000232">
    <property type="term" value="P:regulation of rRNA processing"/>
    <property type="evidence" value="ECO:0000314"/>
    <property type="project" value="ComplexPortal"/>
</dbReference>
<dbReference type="GO" id="GO:0042274">
    <property type="term" value="P:ribosomal small subunit biogenesis"/>
    <property type="evidence" value="ECO:0000303"/>
    <property type="project" value="ComplexPortal"/>
</dbReference>
<dbReference type="CDD" id="cd01882">
    <property type="entry name" value="BMS1"/>
    <property type="match status" value="1"/>
</dbReference>
<dbReference type="FunFam" id="3.40.50.300:FF:000105">
    <property type="entry name" value="BMS1 ribosome biogenesis factor"/>
    <property type="match status" value="1"/>
</dbReference>
<dbReference type="Gene3D" id="3.40.50.300">
    <property type="entry name" value="P-loop containing nucleotide triphosphate hydrolases"/>
    <property type="match status" value="1"/>
</dbReference>
<dbReference type="InterPro" id="IPR012948">
    <property type="entry name" value="AARP2CN"/>
</dbReference>
<dbReference type="InterPro" id="IPR003959">
    <property type="entry name" value="ATPase_AAA_core"/>
</dbReference>
<dbReference type="InterPro" id="IPR039761">
    <property type="entry name" value="Bms1/Tsr1"/>
</dbReference>
<dbReference type="InterPro" id="IPR037875">
    <property type="entry name" value="Bms1_N"/>
</dbReference>
<dbReference type="InterPro" id="IPR007034">
    <property type="entry name" value="BMS1_TSR1_C"/>
</dbReference>
<dbReference type="InterPro" id="IPR030387">
    <property type="entry name" value="G_Bms1/Tsr1_dom"/>
</dbReference>
<dbReference type="InterPro" id="IPR027417">
    <property type="entry name" value="P-loop_NTPase"/>
</dbReference>
<dbReference type="PANTHER" id="PTHR12858">
    <property type="entry name" value="RIBOSOME BIOGENESIS PROTEIN"/>
    <property type="match status" value="1"/>
</dbReference>
<dbReference type="PANTHER" id="PTHR12858:SF2">
    <property type="entry name" value="RIBOSOME BIOGENESIS PROTEIN BMS1 HOMOLOG"/>
    <property type="match status" value="1"/>
</dbReference>
<dbReference type="Pfam" id="PF00004">
    <property type="entry name" value="AAA"/>
    <property type="match status" value="1"/>
</dbReference>
<dbReference type="Pfam" id="PF08142">
    <property type="entry name" value="AARP2CN"/>
    <property type="match status" value="1"/>
</dbReference>
<dbReference type="Pfam" id="PF04950">
    <property type="entry name" value="RIBIOP_C"/>
    <property type="match status" value="1"/>
</dbReference>
<dbReference type="SMART" id="SM00785">
    <property type="entry name" value="AARP2CN"/>
    <property type="match status" value="1"/>
</dbReference>
<dbReference type="SMART" id="SM01362">
    <property type="entry name" value="DUF663"/>
    <property type="match status" value="1"/>
</dbReference>
<dbReference type="SUPFAM" id="SSF52540">
    <property type="entry name" value="P-loop containing nucleoside triphosphate hydrolases"/>
    <property type="match status" value="1"/>
</dbReference>
<dbReference type="PROSITE" id="PS51714">
    <property type="entry name" value="G_BMS1"/>
    <property type="match status" value="1"/>
</dbReference>
<gene>
    <name type="primary">BMS1</name>
    <name type="ordered locus">YPL217C</name>
</gene>
<organism>
    <name type="scientific">Saccharomyces cerevisiae (strain ATCC 204508 / S288c)</name>
    <name type="common">Baker's yeast</name>
    <dbReference type="NCBI Taxonomy" id="559292"/>
    <lineage>
        <taxon>Eukaryota</taxon>
        <taxon>Fungi</taxon>
        <taxon>Dikarya</taxon>
        <taxon>Ascomycota</taxon>
        <taxon>Saccharomycotina</taxon>
        <taxon>Saccharomycetes</taxon>
        <taxon>Saccharomycetales</taxon>
        <taxon>Saccharomycetaceae</taxon>
        <taxon>Saccharomyces</taxon>
    </lineage>
</organism>
<feature type="chain" id="PRO_0000195006" description="Ribosome biogenesis protein BMS1">
    <location>
        <begin position="1"/>
        <end position="1183"/>
    </location>
</feature>
<feature type="domain" description="Bms1-type G" evidence="2">
    <location>
        <begin position="68"/>
        <end position="233"/>
    </location>
</feature>
<feature type="region of interest" description="Disordered" evidence="3">
    <location>
        <begin position="1"/>
        <end position="39"/>
    </location>
</feature>
<feature type="region of interest" description="G1" evidence="2">
    <location>
        <begin position="76"/>
        <end position="83"/>
    </location>
</feature>
<feature type="region of interest" description="G2" evidence="2">
    <location>
        <begin position="104"/>
        <end position="108"/>
    </location>
</feature>
<feature type="region of interest" description="G3" evidence="2">
    <location>
        <begin position="119"/>
        <end position="122"/>
    </location>
</feature>
<feature type="region of interest" description="G4" evidence="2">
    <location>
        <begin position="172"/>
        <end position="175"/>
    </location>
</feature>
<feature type="region of interest" description="G5" evidence="2">
    <location>
        <begin position="207"/>
        <end position="216"/>
    </location>
</feature>
<feature type="region of interest" description="Disordered" evidence="3">
    <location>
        <begin position="427"/>
        <end position="494"/>
    </location>
</feature>
<feature type="region of interest" description="RCL1-binding" evidence="6">
    <location>
        <begin position="536"/>
        <end position="559"/>
    </location>
</feature>
<feature type="region of interest" description="Disordered" evidence="3">
    <location>
        <begin position="639"/>
        <end position="709"/>
    </location>
</feature>
<feature type="region of interest" description="Disordered" evidence="3">
    <location>
        <begin position="1123"/>
        <end position="1183"/>
    </location>
</feature>
<feature type="compositionally biased region" description="Basic residues" evidence="3">
    <location>
        <begin position="1"/>
        <end position="23"/>
    </location>
</feature>
<feature type="compositionally biased region" description="Acidic residues" evidence="3">
    <location>
        <begin position="435"/>
        <end position="447"/>
    </location>
</feature>
<feature type="compositionally biased region" description="Basic residues" evidence="3">
    <location>
        <begin position="451"/>
        <end position="461"/>
    </location>
</feature>
<feature type="compositionally biased region" description="Acidic residues" evidence="3">
    <location>
        <begin position="468"/>
        <end position="491"/>
    </location>
</feature>
<feature type="compositionally biased region" description="Acidic residues" evidence="3">
    <location>
        <begin position="653"/>
        <end position="697"/>
    </location>
</feature>
<feature type="compositionally biased region" description="Basic and acidic residues" evidence="3">
    <location>
        <begin position="1123"/>
        <end position="1136"/>
    </location>
</feature>
<feature type="compositionally biased region" description="Basic and acidic residues" evidence="3">
    <location>
        <begin position="1143"/>
        <end position="1160"/>
    </location>
</feature>
<feature type="compositionally biased region" description="Basic and acidic residues" evidence="3">
    <location>
        <begin position="1174"/>
        <end position="1183"/>
    </location>
</feature>
<feature type="binding site" evidence="1">
    <location>
        <begin position="76"/>
        <end position="83"/>
    </location>
    <ligand>
        <name>ATP</name>
        <dbReference type="ChEBI" id="CHEBI:30616"/>
    </ligand>
</feature>
<feature type="modified residue" description="Phosphoserine" evidence="51">
    <location>
        <position position="438"/>
    </location>
</feature>
<feature type="modified residue" description="Phosphoserine" evidence="50 51">
    <location>
        <position position="478"/>
    </location>
</feature>
<feature type="modified residue" description="Phosphoserine" evidence="51">
    <location>
        <position position="492"/>
    </location>
</feature>
<feature type="modified residue" description="Phosphothreonine" evidence="51">
    <location>
        <position position="504"/>
    </location>
</feature>
<feature type="modified residue" description="Phosphothreonine" evidence="51">
    <location>
        <position position="516"/>
    </location>
</feature>
<feature type="modified residue" description="Phosphoserine" evidence="51">
    <location>
        <position position="518"/>
    </location>
</feature>
<feature type="modified residue" description="Phosphoserine" evidence="51">
    <location>
        <position position="523"/>
    </location>
</feature>
<feature type="modified residue" description="Phosphoserine" evidence="51">
    <location>
        <position position="574"/>
    </location>
</feature>
<feature type="modified residue" description="Phosphoserine" evidence="49 51">
    <location>
        <position position="578"/>
    </location>
</feature>
<feature type="mutagenesis site" description="Strongly decreases binding to GTP." evidence="6">
    <original>K</original>
    <variation>A</variation>
    <location>
        <position position="82"/>
    </location>
</feature>
<feature type="mutagenesis site" description="Strongly decreases binding to RCL1." evidence="6">
    <original>NIS</original>
    <variation>AAA</variation>
    <location>
        <begin position="557"/>
        <end position="559"/>
    </location>
</feature>
<feature type="helix" evidence="52">
    <location>
        <begin position="549"/>
        <end position="553"/>
    </location>
</feature>
<feature type="helix" evidence="52">
    <location>
        <begin position="560"/>
        <end position="567"/>
    </location>
</feature>
<feature type="helix" evidence="52">
    <location>
        <begin position="618"/>
        <end position="624"/>
    </location>
</feature>
<feature type="helix" evidence="52">
    <location>
        <begin position="629"/>
        <end position="634"/>
    </location>
</feature>